<dbReference type="EMBL" id="CM002238">
    <property type="protein sequence ID" value="EAA33664.1"/>
    <property type="molecule type" value="Genomic_DNA"/>
</dbReference>
<dbReference type="RefSeq" id="XP_962900.1">
    <property type="nucleotide sequence ID" value="XM_957807.3"/>
</dbReference>
<dbReference type="PDB" id="6YWV">
    <property type="method" value="EM"/>
    <property type="resolution" value="3.03 A"/>
    <property type="chains" value="J=1-312"/>
</dbReference>
<dbReference type="PDB" id="6YWX">
    <property type="method" value="EM"/>
    <property type="resolution" value="3.10 A"/>
    <property type="chains" value="J=1-312"/>
</dbReference>
<dbReference type="PDBsum" id="6YWV"/>
<dbReference type="PDBsum" id="6YWX"/>
<dbReference type="EMDB" id="EMD-10977"/>
<dbReference type="EMDB" id="EMD-10978"/>
<dbReference type="SMR" id="Q7SB98"/>
<dbReference type="FunCoup" id="Q7SB98">
    <property type="interactions" value="571"/>
</dbReference>
<dbReference type="STRING" id="367110.Q7SB98"/>
<dbReference type="PaxDb" id="5141-EFNCRP00000007626"/>
<dbReference type="EnsemblFungi" id="EAA33664">
    <property type="protein sequence ID" value="EAA33664"/>
    <property type="gene ID" value="NCU05714"/>
</dbReference>
<dbReference type="GeneID" id="3879058"/>
<dbReference type="KEGG" id="ncr:NCU05714"/>
<dbReference type="VEuPathDB" id="FungiDB:NCU05714"/>
<dbReference type="HOGENOM" id="CLU_055188_5_0_1"/>
<dbReference type="InParanoid" id="Q7SB98"/>
<dbReference type="OMA" id="VVTRYYT"/>
<dbReference type="OrthoDB" id="361383at2759"/>
<dbReference type="Proteomes" id="UP000001805">
    <property type="component" value="Chromosome 3, Linkage Group III"/>
</dbReference>
<dbReference type="GO" id="GO:0005762">
    <property type="term" value="C:mitochondrial large ribosomal subunit"/>
    <property type="evidence" value="ECO:0000318"/>
    <property type="project" value="GO_Central"/>
</dbReference>
<dbReference type="GO" id="GO:0003735">
    <property type="term" value="F:structural constituent of ribosome"/>
    <property type="evidence" value="ECO:0000318"/>
    <property type="project" value="GO_Central"/>
</dbReference>
<dbReference type="GO" id="GO:0006412">
    <property type="term" value="P:translation"/>
    <property type="evidence" value="ECO:0007669"/>
    <property type="project" value="InterPro"/>
</dbReference>
<dbReference type="FunFam" id="3.100.10.10:FF:000011">
    <property type="entry name" value="50S ribosomal subunit protein L15"/>
    <property type="match status" value="1"/>
</dbReference>
<dbReference type="Gene3D" id="3.100.10.10">
    <property type="match status" value="1"/>
</dbReference>
<dbReference type="HAMAP" id="MF_01341">
    <property type="entry name" value="Ribosomal_uL15"/>
    <property type="match status" value="1"/>
</dbReference>
<dbReference type="InterPro" id="IPR030878">
    <property type="entry name" value="Ribosomal_uL15"/>
</dbReference>
<dbReference type="InterPro" id="IPR021131">
    <property type="entry name" value="Ribosomal_uL15/eL18"/>
</dbReference>
<dbReference type="InterPro" id="IPR036227">
    <property type="entry name" value="Ribosomal_uL15/eL18_sf"/>
</dbReference>
<dbReference type="InterPro" id="IPR005749">
    <property type="entry name" value="Ribosomal_uL15_bac-type"/>
</dbReference>
<dbReference type="NCBIfam" id="TIGR01071">
    <property type="entry name" value="rplO_bact"/>
    <property type="match status" value="1"/>
</dbReference>
<dbReference type="PANTHER" id="PTHR12934">
    <property type="entry name" value="50S RIBOSOMAL PROTEIN L15"/>
    <property type="match status" value="1"/>
</dbReference>
<dbReference type="PANTHER" id="PTHR12934:SF11">
    <property type="entry name" value="LARGE RIBOSOMAL SUBUNIT PROTEIN UL15M"/>
    <property type="match status" value="1"/>
</dbReference>
<dbReference type="Pfam" id="PF00828">
    <property type="entry name" value="Ribosomal_L27A"/>
    <property type="match status" value="1"/>
</dbReference>
<dbReference type="SUPFAM" id="SSF52080">
    <property type="entry name" value="Ribosomal proteins L15p and L18e"/>
    <property type="match status" value="1"/>
</dbReference>
<proteinExistence type="evidence at protein level"/>
<gene>
    <name type="primary">mrpl10</name>
    <name type="ORF">NCU05714</name>
</gene>
<keyword id="KW-0002">3D-structure</keyword>
<keyword id="KW-0496">Mitochondrion</keyword>
<keyword id="KW-1185">Reference proteome</keyword>
<keyword id="KW-0687">Ribonucleoprotein</keyword>
<keyword id="KW-0689">Ribosomal protein</keyword>
<evidence type="ECO:0000256" key="1">
    <source>
        <dbReference type="SAM" id="MobiDB-lite"/>
    </source>
</evidence>
<evidence type="ECO:0000269" key="2">
    <source>
    </source>
</evidence>
<evidence type="ECO:0000269" key="3">
    <source>
    </source>
</evidence>
<evidence type="ECO:0000303" key="4">
    <source>
    </source>
</evidence>
<evidence type="ECO:0000305" key="5"/>
<evidence type="ECO:0000305" key="6">
    <source>
    </source>
</evidence>
<evidence type="ECO:0007744" key="7">
    <source>
        <dbReference type="PDB" id="6YWV"/>
    </source>
</evidence>
<evidence type="ECO:0007744" key="8">
    <source>
        <dbReference type="PDB" id="6YWX"/>
    </source>
</evidence>
<feature type="chain" id="PRO_0000458613" description="Large ribosomal subunit protein uL15m">
    <location>
        <begin position="1"/>
        <end position="312"/>
    </location>
</feature>
<feature type="region of interest" description="Disordered" evidence="1">
    <location>
        <begin position="63"/>
        <end position="89"/>
    </location>
</feature>
<feature type="compositionally biased region" description="Gly residues" evidence="1">
    <location>
        <begin position="70"/>
        <end position="82"/>
    </location>
</feature>
<name>RM10_NEUCR</name>
<accession>Q7SB98</accession>
<protein>
    <recommendedName>
        <fullName evidence="4">Large ribosomal subunit protein uL15m</fullName>
    </recommendedName>
</protein>
<comment type="function">
    <text evidence="6">Component of the mitochondrial ribosome (mitoribosome), a dedicated translation machinery responsible for the synthesis of mitochondrial genome-encoded proteins, including at least some of the essential transmembrane subunits of the mitochondrial respiratory chain. The mitoribosomes are attached to the mitochondrial inner membrane and translation products are cotranslationally integrated into the membrane.</text>
</comment>
<comment type="subunit">
    <text evidence="2 3">Component of the mitochondrial large ribosomal subunit (mt-LSU). Mature N.crassa 74S mitochondrial ribosomes consist of a small (37S) and a large (54S) subunit. The 37S small subunit contains a 16S ribosomal RNA (16S mt-rRNA) and 32 different proteins. The 54S large subunit contains a 23S rRNA (23S mt-rRNA) and 42 different proteins.</text>
</comment>
<comment type="subcellular location">
    <subcellularLocation>
        <location evidence="2 3">Mitochondrion</location>
    </subcellularLocation>
</comment>
<comment type="similarity">
    <text evidence="5">Belongs to the universal ribosomal protein uL15 family.</text>
</comment>
<organism>
    <name type="scientific">Neurospora crassa (strain ATCC 24698 / 74-OR23-1A / CBS 708.71 / DSM 1257 / FGSC 987)</name>
    <dbReference type="NCBI Taxonomy" id="367110"/>
    <lineage>
        <taxon>Eukaryota</taxon>
        <taxon>Fungi</taxon>
        <taxon>Dikarya</taxon>
        <taxon>Ascomycota</taxon>
        <taxon>Pezizomycotina</taxon>
        <taxon>Sordariomycetes</taxon>
        <taxon>Sordariomycetidae</taxon>
        <taxon>Sordariales</taxon>
        <taxon>Sordariaceae</taxon>
        <taxon>Neurospora</taxon>
    </lineage>
</organism>
<sequence length="312" mass="33891">MPPRLPLAQAARCCQASLTARPSVPASSPTSSLISLFAALSVQTRSASILASLSDNRGAYHKRIRKGRGPSSGYGKTAGRGTKGQKAHGHVKPWFQGGQTPLIVSHGRKGFVNQFAADMSELNLEKLQEWIEAGRIDPTKPITPKEIIKSGIIGSSIKDGIKLLGRGKESFKIPVTITVSRASASAIEAIEAAGGKIVTRFYTKESLKRLVEGKSLHTDKPLPVGKEHVEEILAQARSLKKKYYRLPDPTSRWDIEYYRDPAHRGYLSHQLAPGESPSLYFKVPTGGEKVKVVRADKVKASKTGDVASEKLF</sequence>
<reference key="1">
    <citation type="journal article" date="2003" name="Nature">
        <title>The genome sequence of the filamentous fungus Neurospora crassa.</title>
        <authorList>
            <person name="Galagan J.E."/>
            <person name="Calvo S.E."/>
            <person name="Borkovich K.A."/>
            <person name="Selker E.U."/>
            <person name="Read N.D."/>
            <person name="Jaffe D.B."/>
            <person name="FitzHugh W."/>
            <person name="Ma L.-J."/>
            <person name="Smirnov S."/>
            <person name="Purcell S."/>
            <person name="Rehman B."/>
            <person name="Elkins T."/>
            <person name="Engels R."/>
            <person name="Wang S."/>
            <person name="Nielsen C.B."/>
            <person name="Butler J."/>
            <person name="Endrizzi M."/>
            <person name="Qui D."/>
            <person name="Ianakiev P."/>
            <person name="Bell-Pedersen D."/>
            <person name="Nelson M.A."/>
            <person name="Werner-Washburne M."/>
            <person name="Selitrennikoff C.P."/>
            <person name="Kinsey J.A."/>
            <person name="Braun E.L."/>
            <person name="Zelter A."/>
            <person name="Schulte U."/>
            <person name="Kothe G.O."/>
            <person name="Jedd G."/>
            <person name="Mewes H.-W."/>
            <person name="Staben C."/>
            <person name="Marcotte E."/>
            <person name="Greenberg D."/>
            <person name="Roy A."/>
            <person name="Foley K."/>
            <person name="Naylor J."/>
            <person name="Stange-Thomann N."/>
            <person name="Barrett R."/>
            <person name="Gnerre S."/>
            <person name="Kamal M."/>
            <person name="Kamvysselis M."/>
            <person name="Mauceli E.W."/>
            <person name="Bielke C."/>
            <person name="Rudd S."/>
            <person name="Frishman D."/>
            <person name="Krystofova S."/>
            <person name="Rasmussen C."/>
            <person name="Metzenberg R.L."/>
            <person name="Perkins D.D."/>
            <person name="Kroken S."/>
            <person name="Cogoni C."/>
            <person name="Macino G."/>
            <person name="Catcheside D.E.A."/>
            <person name="Li W."/>
            <person name="Pratt R.J."/>
            <person name="Osmani S.A."/>
            <person name="DeSouza C.P.C."/>
            <person name="Glass N.L."/>
            <person name="Orbach M.J."/>
            <person name="Berglund J.A."/>
            <person name="Voelker R."/>
            <person name="Yarden O."/>
            <person name="Plamann M."/>
            <person name="Seiler S."/>
            <person name="Dunlap J.C."/>
            <person name="Radford A."/>
            <person name="Aramayo R."/>
            <person name="Natvig D.O."/>
            <person name="Alex L.A."/>
            <person name="Mannhaupt G."/>
            <person name="Ebbole D.J."/>
            <person name="Freitag M."/>
            <person name="Paulsen I."/>
            <person name="Sachs M.S."/>
            <person name="Lander E.S."/>
            <person name="Nusbaum C."/>
            <person name="Birren B.W."/>
        </authorList>
    </citation>
    <scope>NUCLEOTIDE SEQUENCE [LARGE SCALE GENOMIC DNA]</scope>
    <source>
        <strain>ATCC 24698 / 74-OR23-1A / CBS 708.71 / DSM 1257 / FGSC 987</strain>
    </source>
</reference>
<reference key="2">
    <citation type="journal article" date="2006" name="FEMS Microbiol. Lett.">
        <title>Identification and comparative analysis of the large subunit mitochondrial ribosomal proteins of Neurospora crassa.</title>
        <authorList>
            <person name="Gan X."/>
            <person name="Arita K."/>
            <person name="Isono S."/>
            <person name="Kitakawa M."/>
            <person name="Yoshino K."/>
            <person name="Yonezawa K."/>
            <person name="Kato A."/>
            <person name="Inoue H."/>
            <person name="Isono K."/>
        </authorList>
    </citation>
    <scope>IDENTIFICATION IN THE MITOCHONDRIAL RIBOSOMAL LARGE COMPLEX</scope>
    <scope>IDENTIFICATION BY MASS SPECTROMETRY</scope>
</reference>
<reference evidence="7 8" key="3">
    <citation type="journal article" date="2020" name="Nat. Commun.">
        <title>Analysis of translating mitoribosome reveals functional characteristics of translation in mitochondria of fungi.</title>
        <authorList>
            <person name="Itoh Y."/>
            <person name="Naschberger A."/>
            <person name="Mortezaei N."/>
            <person name="Herrmann J.M."/>
            <person name="Amunts A."/>
        </authorList>
    </citation>
    <scope>STRUCTURE BY ELECTRON MICROSCOPY (3.03 ANGSTROMS)</scope>
</reference>